<accession>B9IZJ5</accession>
<reference key="1">
    <citation type="journal article" date="2009" name="J. Bacteriol.">
        <title>Complete genome sequence of the extremophilic Bacillus cereus strain Q1 with industrial applications.</title>
        <authorList>
            <person name="Xiong Z."/>
            <person name="Jiang Y."/>
            <person name="Qi D."/>
            <person name="Lu H."/>
            <person name="Yang F."/>
            <person name="Yang J."/>
            <person name="Chen L."/>
            <person name="Sun L."/>
            <person name="Xu X."/>
            <person name="Xue Y."/>
            <person name="Zhu Y."/>
            <person name="Jin Q."/>
        </authorList>
    </citation>
    <scope>NUCLEOTIDE SEQUENCE [LARGE SCALE GENOMIC DNA]</scope>
    <source>
        <strain>Q1</strain>
    </source>
</reference>
<feature type="chain" id="PRO_1000165986" description="Large ribosomal subunit protein uL4">
    <location>
        <begin position="1"/>
        <end position="207"/>
    </location>
</feature>
<feature type="region of interest" description="Disordered" evidence="2">
    <location>
        <begin position="45"/>
        <end position="89"/>
    </location>
</feature>
<feature type="compositionally biased region" description="Basic residues" evidence="2">
    <location>
        <begin position="60"/>
        <end position="71"/>
    </location>
</feature>
<proteinExistence type="inferred from homology"/>
<gene>
    <name evidence="1" type="primary">rplD</name>
    <name type="ordered locus">BCQ_0124</name>
</gene>
<keyword id="KW-0687">Ribonucleoprotein</keyword>
<keyword id="KW-0689">Ribosomal protein</keyword>
<keyword id="KW-0694">RNA-binding</keyword>
<keyword id="KW-0699">rRNA-binding</keyword>
<organism>
    <name type="scientific">Bacillus cereus (strain Q1)</name>
    <dbReference type="NCBI Taxonomy" id="361100"/>
    <lineage>
        <taxon>Bacteria</taxon>
        <taxon>Bacillati</taxon>
        <taxon>Bacillota</taxon>
        <taxon>Bacilli</taxon>
        <taxon>Bacillales</taxon>
        <taxon>Bacillaceae</taxon>
        <taxon>Bacillus</taxon>
        <taxon>Bacillus cereus group</taxon>
    </lineage>
</organism>
<name>RL4_BACCQ</name>
<comment type="function">
    <text evidence="1">One of the primary rRNA binding proteins, this protein initially binds near the 5'-end of the 23S rRNA. It is important during the early stages of 50S assembly. It makes multiple contacts with different domains of the 23S rRNA in the assembled 50S subunit and ribosome.</text>
</comment>
<comment type="function">
    <text evidence="1">Forms part of the polypeptide exit tunnel.</text>
</comment>
<comment type="subunit">
    <text evidence="1">Part of the 50S ribosomal subunit.</text>
</comment>
<comment type="similarity">
    <text evidence="1">Belongs to the universal ribosomal protein uL4 family.</text>
</comment>
<protein>
    <recommendedName>
        <fullName evidence="1">Large ribosomal subunit protein uL4</fullName>
    </recommendedName>
    <alternativeName>
        <fullName evidence="3">50S ribosomal protein L4</fullName>
    </alternativeName>
</protein>
<evidence type="ECO:0000255" key="1">
    <source>
        <dbReference type="HAMAP-Rule" id="MF_01328"/>
    </source>
</evidence>
<evidence type="ECO:0000256" key="2">
    <source>
        <dbReference type="SAM" id="MobiDB-lite"/>
    </source>
</evidence>
<evidence type="ECO:0000305" key="3"/>
<sequence length="207" mass="22530">MPKVTVYNQTGSQVGEIELAEAIFGIEPNEAVLFEAVMMQRASLRQGTHKVKTRSEVRGGGRKPWRQKGTGRARQGSIRSPQWRGGGTVFGPTPRSYAYKLPKKVRRLAIKSALATKVVENNIVVLEDLVLNAPKTKDMLAVLKGLTVEKKALIVTADANESVELSARNIPGVTVITADGVNVLDVLHHDKLIMTKAAVEKVEEVLA</sequence>
<dbReference type="EMBL" id="CP000227">
    <property type="protein sequence ID" value="ACM10639.1"/>
    <property type="molecule type" value="Genomic_DNA"/>
</dbReference>
<dbReference type="SMR" id="B9IZJ5"/>
<dbReference type="KEGG" id="bcq:BCQ_0124"/>
<dbReference type="HOGENOM" id="CLU_041575_5_2_9"/>
<dbReference type="Proteomes" id="UP000000441">
    <property type="component" value="Chromosome"/>
</dbReference>
<dbReference type="GO" id="GO:1990904">
    <property type="term" value="C:ribonucleoprotein complex"/>
    <property type="evidence" value="ECO:0007669"/>
    <property type="project" value="UniProtKB-KW"/>
</dbReference>
<dbReference type="GO" id="GO:0005840">
    <property type="term" value="C:ribosome"/>
    <property type="evidence" value="ECO:0007669"/>
    <property type="project" value="UniProtKB-KW"/>
</dbReference>
<dbReference type="GO" id="GO:0019843">
    <property type="term" value="F:rRNA binding"/>
    <property type="evidence" value="ECO:0007669"/>
    <property type="project" value="UniProtKB-UniRule"/>
</dbReference>
<dbReference type="GO" id="GO:0003735">
    <property type="term" value="F:structural constituent of ribosome"/>
    <property type="evidence" value="ECO:0007669"/>
    <property type="project" value="InterPro"/>
</dbReference>
<dbReference type="GO" id="GO:0006412">
    <property type="term" value="P:translation"/>
    <property type="evidence" value="ECO:0007669"/>
    <property type="project" value="UniProtKB-UniRule"/>
</dbReference>
<dbReference type="FunFam" id="3.40.1370.10:FF:000003">
    <property type="entry name" value="50S ribosomal protein L4"/>
    <property type="match status" value="1"/>
</dbReference>
<dbReference type="Gene3D" id="3.40.1370.10">
    <property type="match status" value="1"/>
</dbReference>
<dbReference type="HAMAP" id="MF_01328_B">
    <property type="entry name" value="Ribosomal_uL4_B"/>
    <property type="match status" value="1"/>
</dbReference>
<dbReference type="InterPro" id="IPR002136">
    <property type="entry name" value="Ribosomal_uL4"/>
</dbReference>
<dbReference type="InterPro" id="IPR013005">
    <property type="entry name" value="Ribosomal_uL4-like"/>
</dbReference>
<dbReference type="InterPro" id="IPR023574">
    <property type="entry name" value="Ribosomal_uL4_dom_sf"/>
</dbReference>
<dbReference type="NCBIfam" id="TIGR03953">
    <property type="entry name" value="rplD_bact"/>
    <property type="match status" value="1"/>
</dbReference>
<dbReference type="PANTHER" id="PTHR10746">
    <property type="entry name" value="50S RIBOSOMAL PROTEIN L4"/>
    <property type="match status" value="1"/>
</dbReference>
<dbReference type="PANTHER" id="PTHR10746:SF6">
    <property type="entry name" value="LARGE RIBOSOMAL SUBUNIT PROTEIN UL4M"/>
    <property type="match status" value="1"/>
</dbReference>
<dbReference type="Pfam" id="PF00573">
    <property type="entry name" value="Ribosomal_L4"/>
    <property type="match status" value="1"/>
</dbReference>
<dbReference type="SUPFAM" id="SSF52166">
    <property type="entry name" value="Ribosomal protein L4"/>
    <property type="match status" value="1"/>
</dbReference>